<keyword id="KW-0963">Cytoplasm</keyword>
<keyword id="KW-0489">Methyltransferase</keyword>
<keyword id="KW-1185">Reference proteome</keyword>
<keyword id="KW-0698">rRNA processing</keyword>
<keyword id="KW-0949">S-adenosyl-L-methionine</keyword>
<keyword id="KW-0808">Transferase</keyword>
<protein>
    <recommendedName>
        <fullName evidence="1">Ribosomal RNA large subunit methyltransferase H</fullName>
        <ecNumber evidence="1">2.1.1.177</ecNumber>
    </recommendedName>
    <alternativeName>
        <fullName evidence="1">23S rRNA (pseudouridine1915-N3)-methyltransferase</fullName>
    </alternativeName>
    <alternativeName>
        <fullName evidence="1">23S rRNA m3Psi1915 methyltransferase</fullName>
    </alternativeName>
    <alternativeName>
        <fullName evidence="1">rRNA (pseudouridine-N3-)-methyltransferase RlmH</fullName>
    </alternativeName>
</protein>
<evidence type="ECO:0000255" key="1">
    <source>
        <dbReference type="HAMAP-Rule" id="MF_00658"/>
    </source>
</evidence>
<comment type="function">
    <text evidence="1">Specifically methylates the pseudouridine at position 1915 (m3Psi1915) in 23S rRNA.</text>
</comment>
<comment type="catalytic activity">
    <reaction evidence="1">
        <text>pseudouridine(1915) in 23S rRNA + S-adenosyl-L-methionine = N(3)-methylpseudouridine(1915) in 23S rRNA + S-adenosyl-L-homocysteine + H(+)</text>
        <dbReference type="Rhea" id="RHEA:42752"/>
        <dbReference type="Rhea" id="RHEA-COMP:10221"/>
        <dbReference type="Rhea" id="RHEA-COMP:10222"/>
        <dbReference type="ChEBI" id="CHEBI:15378"/>
        <dbReference type="ChEBI" id="CHEBI:57856"/>
        <dbReference type="ChEBI" id="CHEBI:59789"/>
        <dbReference type="ChEBI" id="CHEBI:65314"/>
        <dbReference type="ChEBI" id="CHEBI:74486"/>
        <dbReference type="EC" id="2.1.1.177"/>
    </reaction>
</comment>
<comment type="subunit">
    <text evidence="1">Homodimer.</text>
</comment>
<comment type="subcellular location">
    <subcellularLocation>
        <location evidence="1">Cytoplasm</location>
    </subcellularLocation>
</comment>
<comment type="similarity">
    <text evidence="1">Belongs to the RNA methyltransferase RlmH family.</text>
</comment>
<gene>
    <name evidence="1" type="primary">rlmH</name>
    <name type="ordered locus">RD1_0621</name>
</gene>
<feature type="chain" id="PRO_0000260601" description="Ribosomal RNA large subunit methyltransferase H">
    <location>
        <begin position="1"/>
        <end position="156"/>
    </location>
</feature>
<feature type="binding site" evidence="1">
    <location>
        <position position="72"/>
    </location>
    <ligand>
        <name>S-adenosyl-L-methionine</name>
        <dbReference type="ChEBI" id="CHEBI:59789"/>
    </ligand>
</feature>
<feature type="binding site" evidence="1">
    <location>
        <position position="104"/>
    </location>
    <ligand>
        <name>S-adenosyl-L-methionine</name>
        <dbReference type="ChEBI" id="CHEBI:59789"/>
    </ligand>
</feature>
<feature type="binding site" evidence="1">
    <location>
        <begin position="123"/>
        <end position="128"/>
    </location>
    <ligand>
        <name>S-adenosyl-L-methionine</name>
        <dbReference type="ChEBI" id="CHEBI:59789"/>
    </ligand>
</feature>
<organism>
    <name type="scientific">Roseobacter denitrificans (strain ATCC 33942 / OCh 114)</name>
    <name type="common">Erythrobacter sp. (strain OCh 114)</name>
    <name type="synonym">Roseobacter denitrificans</name>
    <dbReference type="NCBI Taxonomy" id="375451"/>
    <lineage>
        <taxon>Bacteria</taxon>
        <taxon>Pseudomonadati</taxon>
        <taxon>Pseudomonadota</taxon>
        <taxon>Alphaproteobacteria</taxon>
        <taxon>Rhodobacterales</taxon>
        <taxon>Roseobacteraceae</taxon>
        <taxon>Roseobacter</taxon>
    </lineage>
</organism>
<proteinExistence type="inferred from homology"/>
<accession>Q16CH2</accession>
<dbReference type="EC" id="2.1.1.177" evidence="1"/>
<dbReference type="EMBL" id="CP000362">
    <property type="protein sequence ID" value="ABG30321.1"/>
    <property type="molecule type" value="Genomic_DNA"/>
</dbReference>
<dbReference type="RefSeq" id="WP_011566943.1">
    <property type="nucleotide sequence ID" value="NC_008209.1"/>
</dbReference>
<dbReference type="SMR" id="Q16CH2"/>
<dbReference type="STRING" id="375451.RD1_0621"/>
<dbReference type="KEGG" id="rde:RD1_0621"/>
<dbReference type="eggNOG" id="COG1576">
    <property type="taxonomic scope" value="Bacteria"/>
</dbReference>
<dbReference type="HOGENOM" id="CLU_100552_1_1_5"/>
<dbReference type="OrthoDB" id="9806643at2"/>
<dbReference type="Proteomes" id="UP000007029">
    <property type="component" value="Chromosome"/>
</dbReference>
<dbReference type="GO" id="GO:0005737">
    <property type="term" value="C:cytoplasm"/>
    <property type="evidence" value="ECO:0007669"/>
    <property type="project" value="UniProtKB-SubCell"/>
</dbReference>
<dbReference type="GO" id="GO:0070038">
    <property type="term" value="F:rRNA (pseudouridine-N3-)-methyltransferase activity"/>
    <property type="evidence" value="ECO:0007669"/>
    <property type="project" value="UniProtKB-UniRule"/>
</dbReference>
<dbReference type="CDD" id="cd18081">
    <property type="entry name" value="RlmH-like"/>
    <property type="match status" value="1"/>
</dbReference>
<dbReference type="Gene3D" id="3.40.1280.10">
    <property type="match status" value="1"/>
</dbReference>
<dbReference type="HAMAP" id="MF_00658">
    <property type="entry name" value="23SrRNA_methyltr_H"/>
    <property type="match status" value="1"/>
</dbReference>
<dbReference type="InterPro" id="IPR029028">
    <property type="entry name" value="Alpha/beta_knot_MTases"/>
</dbReference>
<dbReference type="InterPro" id="IPR003742">
    <property type="entry name" value="RlmH-like"/>
</dbReference>
<dbReference type="InterPro" id="IPR029026">
    <property type="entry name" value="tRNA_m1G_MTases_N"/>
</dbReference>
<dbReference type="NCBIfam" id="NF000988">
    <property type="entry name" value="PRK00103.2-2"/>
    <property type="match status" value="1"/>
</dbReference>
<dbReference type="NCBIfam" id="NF000989">
    <property type="entry name" value="PRK00103.2-3"/>
    <property type="match status" value="1"/>
</dbReference>
<dbReference type="PANTHER" id="PTHR33603">
    <property type="entry name" value="METHYLTRANSFERASE"/>
    <property type="match status" value="1"/>
</dbReference>
<dbReference type="PANTHER" id="PTHR33603:SF1">
    <property type="entry name" value="RIBOSOMAL RNA LARGE SUBUNIT METHYLTRANSFERASE H"/>
    <property type="match status" value="1"/>
</dbReference>
<dbReference type="Pfam" id="PF02590">
    <property type="entry name" value="SPOUT_MTase"/>
    <property type="match status" value="1"/>
</dbReference>
<dbReference type="PIRSF" id="PIRSF004505">
    <property type="entry name" value="MT_bac"/>
    <property type="match status" value="1"/>
</dbReference>
<dbReference type="SUPFAM" id="SSF75217">
    <property type="entry name" value="alpha/beta knot"/>
    <property type="match status" value="1"/>
</dbReference>
<name>RLMH_ROSDO</name>
<sequence length="156" mass="16861">MRIHIIAVGRLRAGPEKDLIGDYLTRFARSGRALGLGPARVVEVEDRKNGGMGNEAALLRRAIPDGALIAVLDERGRVESSPDFAQRLAGWRDQGRGDLALVIGGADGIDPALRAEADFALSLGKMVWPHMLVRVMLAEQLYRAASILAGAPYHRN</sequence>
<reference key="1">
    <citation type="journal article" date="2007" name="J. Bacteriol.">
        <title>The complete genome sequence of Roseobacter denitrificans reveals a mixotrophic rather than photosynthetic metabolism.</title>
        <authorList>
            <person name="Swingley W.D."/>
            <person name="Sadekar S."/>
            <person name="Mastrian S.D."/>
            <person name="Matthies H.J."/>
            <person name="Hao J."/>
            <person name="Ramos H."/>
            <person name="Acharya C.R."/>
            <person name="Conrad A.L."/>
            <person name="Taylor H.L."/>
            <person name="Dejesa L.C."/>
            <person name="Shah M.K."/>
            <person name="O'Huallachain M.E."/>
            <person name="Lince M.T."/>
            <person name="Blankenship R.E."/>
            <person name="Beatty J.T."/>
            <person name="Touchman J.W."/>
        </authorList>
    </citation>
    <scope>NUCLEOTIDE SEQUENCE [LARGE SCALE GENOMIC DNA]</scope>
    <source>
        <strain>ATCC 33942 / OCh 114</strain>
    </source>
</reference>